<keyword id="KW-0002">3D-structure</keyword>
<keyword id="KW-0025">Alternative splicing</keyword>
<keyword id="KW-1003">Cell membrane</keyword>
<keyword id="KW-0256">Endoplasmic reticulum</keyword>
<keyword id="KW-0391">Immunity</keyword>
<keyword id="KW-0399">Innate immunity</keyword>
<keyword id="KW-0472">Membrane</keyword>
<keyword id="KW-0539">Nucleus</keyword>
<keyword id="KW-1267">Proteomics identification</keyword>
<keyword id="KW-1185">Reference proteome</keyword>
<keyword id="KW-0812">Transmembrane</keyword>
<keyword id="KW-1133">Transmembrane helix</keyword>
<protein>
    <recommendedName>
        <fullName evidence="12">Transmembrane protein 120A</fullName>
    </recommendedName>
    <alternativeName>
        <fullName>Protein TACAN</fullName>
    </alternativeName>
    <alternativeName>
        <fullName evidence="14">Transmembrane protein induced by tumor necrosis factor alpha</fullName>
    </alternativeName>
</protein>
<reference key="1">
    <citation type="submission" date="2000-12" db="EMBL/GenBank/DDBJ databases">
        <title>Endothelial cell transmembrane protein induced by tumor necrosis factor alpha (TMPIT) mRNA, complete cds.</title>
        <authorList>
            <person name="Murakami T."/>
            <person name="Mataki C."/>
            <person name="Hamakubo T."/>
            <person name="Kodama T."/>
        </authorList>
    </citation>
    <scope>NUCLEOTIDE SEQUENCE [MRNA] (ISOFORM 1)</scope>
</reference>
<reference key="2">
    <citation type="submission" date="2005-07" db="EMBL/GenBank/DDBJ databases">
        <authorList>
            <person name="Mural R.J."/>
            <person name="Istrail S."/>
            <person name="Sutton G.G."/>
            <person name="Florea L."/>
            <person name="Halpern A.L."/>
            <person name="Mobarry C.M."/>
            <person name="Lippert R."/>
            <person name="Walenz B."/>
            <person name="Shatkay H."/>
            <person name="Dew I."/>
            <person name="Miller J.R."/>
            <person name="Flanigan M.J."/>
            <person name="Edwards N.J."/>
            <person name="Bolanos R."/>
            <person name="Fasulo D."/>
            <person name="Halldorsson B.V."/>
            <person name="Hannenhalli S."/>
            <person name="Turner R."/>
            <person name="Yooseph S."/>
            <person name="Lu F."/>
            <person name="Nusskern D.R."/>
            <person name="Shue B.C."/>
            <person name="Zheng X.H."/>
            <person name="Zhong F."/>
            <person name="Delcher A.L."/>
            <person name="Huson D.H."/>
            <person name="Kravitz S.A."/>
            <person name="Mouchard L."/>
            <person name="Reinert K."/>
            <person name="Remington K.A."/>
            <person name="Clark A.G."/>
            <person name="Waterman M.S."/>
            <person name="Eichler E.E."/>
            <person name="Adams M.D."/>
            <person name="Hunkapiller M.W."/>
            <person name="Myers E.W."/>
            <person name="Venter J.C."/>
        </authorList>
    </citation>
    <scope>NUCLEOTIDE SEQUENCE [LARGE SCALE GENOMIC DNA]</scope>
</reference>
<reference key="3">
    <citation type="journal article" date="2004" name="Genome Res.">
        <title>The status, quality, and expansion of the NIH full-length cDNA project: the Mammalian Gene Collection (MGC).</title>
        <authorList>
            <consortium name="The MGC Project Team"/>
        </authorList>
    </citation>
    <scope>NUCLEOTIDE SEQUENCE [LARGE SCALE MRNA] (ISOFORMS 1 AND 2)</scope>
    <scope>VARIANTS ARG-86 AND ALA-201</scope>
    <source>
        <tissue>Brain</tissue>
        <tissue>PNS</tissue>
    </source>
</reference>
<reference key="4">
    <citation type="journal article" date="2014" name="J. Proteomics">
        <title>An enzyme assisted RP-RPLC approach for in-depth analysis of human liver phosphoproteome.</title>
        <authorList>
            <person name="Bian Y."/>
            <person name="Song C."/>
            <person name="Cheng K."/>
            <person name="Dong M."/>
            <person name="Wang F."/>
            <person name="Huang J."/>
            <person name="Sun D."/>
            <person name="Wang L."/>
            <person name="Ye M."/>
            <person name="Zou H."/>
        </authorList>
    </citation>
    <scope>IDENTIFICATION BY MASS SPECTROMETRY [LARGE SCALE ANALYSIS]</scope>
    <source>
        <tissue>Liver</tissue>
    </source>
</reference>
<reference key="5">
    <citation type="journal article" date="2015" name="PLoS ONE">
        <title>TMEM120A and B: nuclear envelope transmembrane proteins important for adipocyte differentiation.</title>
        <authorList>
            <person name="Batrakou D.G."/>
            <person name="de Las Heras J.I."/>
            <person name="Czapiewski R."/>
            <person name="Mouras R."/>
            <person name="Schirmer E.C."/>
        </authorList>
    </citation>
    <scope>FUNCTION</scope>
    <scope>SUBUNIT</scope>
</reference>
<reference key="6">
    <citation type="journal article" date="2020" name="Cell">
        <title>TACAN is an ion channel involved in sensing mechanical pain.</title>
        <authorList>
            <person name="Beaulieu-Laroche L."/>
            <person name="Christin M."/>
            <person name="Donoghue A."/>
            <person name="Agosti F."/>
            <person name="Yousefpour N."/>
            <person name="Petitjean H."/>
            <person name="Davidova A."/>
            <person name="Stanton C."/>
            <person name="Khan U."/>
            <person name="Dietz C."/>
            <person name="Faure E."/>
            <person name="Fatima T."/>
            <person name="MacPherson A."/>
            <person name="Mouchbahani-Constance S."/>
            <person name="Bisson D.G."/>
            <person name="Haglund L."/>
            <person name="Ouellet J.A."/>
            <person name="Stone L.S."/>
            <person name="Samson J."/>
            <person name="Smith M.J."/>
            <person name="Ask K."/>
            <person name="Ribeiro-da-Silva A."/>
            <person name="Blunck R."/>
            <person name="Poole K."/>
            <person name="Bourinet E."/>
            <person name="Sharif-Naeini R."/>
        </authorList>
    </citation>
    <scope>TISSUE SPECIFICITY</scope>
</reference>
<reference evidence="18" key="7">
    <citation type="journal article" date="2021" name="Cell Discov.">
        <title>Cryo-EM structures of human TMEM120A and TMEM120B.</title>
        <authorList>
            <person name="Ke M."/>
            <person name="Yu Y."/>
            <person name="Zhao C."/>
            <person name="Lai S."/>
            <person name="Su Q."/>
            <person name="Yuan W."/>
            <person name="Yang L."/>
            <person name="Deng D."/>
            <person name="Wu K."/>
            <person name="Zeng W."/>
            <person name="Geng J."/>
            <person name="Wu J."/>
            <person name="Yan Z."/>
        </authorList>
    </citation>
    <scope>STRUCTURE BY ELECTRON MICROSCOPY (3.40 ANGSTROMS)</scope>
    <scope>SUBUNIT</scope>
    <scope>FUNCTION</scope>
</reference>
<reference evidence="22" key="8">
    <citation type="journal article" date="2021" name="Elife">
        <title>TMEM120A is a coenzyme A-binding membrane protein with structural similarities to ELOVL fatty acid elongase.</title>
        <authorList>
            <person name="Xue J."/>
            <person name="Han Y."/>
            <person name="Baniasadi H."/>
            <person name="Zeng W."/>
            <person name="Pei J."/>
            <person name="Grishin N.V."/>
            <person name="Wang J."/>
            <person name="Tu B.P."/>
            <person name="Jiang Y."/>
        </authorList>
    </citation>
    <scope>STRUCTURE BY ELECTRON MICROSCOPY (3.24 ANGSTROMS) OF 2-343 IN COMPLEX WITH COA</scope>
    <scope>SUBUNIT</scope>
    <scope>FUNCTION</scope>
    <scope>DOMAIN</scope>
</reference>
<reference evidence="19 20" key="9">
    <citation type="journal article" date="2021" name="Elife">
        <title>TMEM120A contains a specific coenzyme A-binding site and might not mediate poking- or stretch-induced channel activities in cells.</title>
        <authorList>
            <person name="Rong Y."/>
            <person name="Jiang J."/>
            <person name="Gao Y."/>
            <person name="Guo J."/>
            <person name="Song D."/>
            <person name="Liu W."/>
            <person name="Zhang M."/>
            <person name="Zhao Y."/>
            <person name="Xiao B."/>
            <person name="Liu Z."/>
        </authorList>
    </citation>
    <scope>STRUCTURE BY ELECTRON MICROSCOPY (3.69 ANGSTROMS) OF 2-343 IN COMPLEX WITH COA</scope>
    <scope>SUBUNIT</scope>
    <scope>FUNCTION</scope>
    <scope>MUTAGENESIS OF TRP-193</scope>
    <scope>DOMAIN</scope>
</reference>
<reference evidence="21" key="10">
    <citation type="journal article" date="2022" name="Cell Rep.">
        <title>Cryo-EM structure of the human TACAN in a closed state.</title>
        <authorList>
            <person name="Chen X."/>
            <person name="Wang Y."/>
            <person name="Li Y."/>
            <person name="Lu X."/>
            <person name="Chen J."/>
            <person name="Li M."/>
            <person name="Wen T."/>
            <person name="Liu N."/>
            <person name="Chang S."/>
            <person name="Zhang X."/>
            <person name="Yang X."/>
            <person name="Shen Y."/>
        </authorList>
    </citation>
    <scope>STRUCTURE BY ELECTRON MICROSCOPY (3.66 ANGSTROMS)</scope>
    <scope>SUBUNIT</scope>
    <scope>FUNCTION</scope>
    <scope>MUTAGENESIS OF MET-207</scope>
</reference>
<reference key="11">
    <citation type="journal article" date="2022" name="Nat. Commun.">
        <title>Gain-of-function genetic screening identifies the antiviral function of TMEM120A via STING activation.</title>
        <authorList>
            <person name="Li S."/>
            <person name="Qian N."/>
            <person name="Jiang C."/>
            <person name="Zu W."/>
            <person name="Liang A."/>
            <person name="Li M."/>
            <person name="Elledge S.J."/>
            <person name="Tan X."/>
        </authorList>
    </citation>
    <scope>FUNCTION</scope>
    <scope>SUBCELLULAR LOCATION</scope>
    <scope>SUBUNIT</scope>
    <scope>INTERACTION WITH STING1</scope>
</reference>
<reference key="12">
    <citation type="journal article" date="2023" name="J. Physiol. (Lond.)">
        <title>Regulation of PKD2 channel function by TACAN.</title>
        <authorList>
            <person name="Liu X."/>
            <person name="Zhang R."/>
            <person name="Fatehi M."/>
            <person name="Wang Y."/>
            <person name="Long W."/>
            <person name="Tian R."/>
            <person name="Deng X."/>
            <person name="Weng Z."/>
            <person name="Xu Q."/>
            <person name="Light P.E."/>
            <person name="Tang J."/>
            <person name="Chen X.Z."/>
        </authorList>
    </citation>
    <scope>FUNCTION</scope>
    <scope>SUBUNIT</scope>
    <scope>INTERACTION WITH PKD2</scope>
</reference>
<comment type="function">
    <text evidence="1 3 5 6 7 8 9 10">Multifunctional protein involved in mechanosensation, and plays an essential role in lipid metabolism and adipocyte differentiation (PubMed:26024229, PubMed:36420836). May function as a potential ion channel involved in sensing mechanical stimuli (PubMed:35235791). Mediates the mechanosensitivity of the PKD2-TMEM120A channel complex through direct physical interaction (PubMed:36420836). TMEM120A seems to affect mechanosensation by inhibiting PIEZO2 channels, possibly by altering cellular lipid content (By similarity). TMEM120A is structurally similar to a lipid-modifying enzyme, ELOVL7, and contains a bound coenzyme A molecule, which suggests it might function as an enzyme in lipid metabolism (PubMed:34374645, PubMed:34409941, PubMed:34465718). Additionnaly, implicated in innate immune response against Zika virus. Acts as a key activator of the antiviral signaling involving STING1 (PubMed:35013224).</text>
</comment>
<comment type="subunit">
    <text evidence="3 5 6 7 8 9 10">Homodimer (PubMed:34374645, PubMed:34409941, PubMed:34465718, PubMed:35235791). Forms heterooligomer with TMEM120B (PubMed:26024229). Interacts with PKD2; TMEM120A inhibits PKD2 channel activity through the physical association of PKD2 with TMEM120A (PubMed:36420836). Interacts (via C-terminal domain) with STING1; regulates the trafficking of STING1 from the ER to the ER-Golgi intermediate compartment to elicit antiviral effects (PubMed:35013224).</text>
</comment>
<comment type="interaction">
    <interactant intactId="EBI-727322">
        <id>Q9BXJ8</id>
    </interactant>
    <interactant intactId="EBI-13059134">
        <id>Q13520</id>
        <label>AQP6</label>
    </interactant>
    <organismsDiffer>false</organismsDiffer>
    <experiments>3</experiments>
</comment>
<comment type="interaction">
    <interactant intactId="EBI-727322">
        <id>Q9BXJ8</id>
    </interactant>
    <interactant intactId="EBI-700794">
        <id>Q13323</id>
        <label>BIK</label>
    </interactant>
    <organismsDiffer>false</organismsDiffer>
    <experiments>3</experiments>
</comment>
<comment type="interaction">
    <interactant intactId="EBI-727322">
        <id>Q9BXJ8</id>
    </interactant>
    <interactant intactId="EBI-8637742">
        <id>Q53TN4</id>
        <label>CYBRD1</label>
    </interactant>
    <organismsDiffer>false</organismsDiffer>
    <experiments>3</experiments>
</comment>
<comment type="interaction">
    <interactant intactId="EBI-727322">
        <id>Q9BXJ8</id>
    </interactant>
    <interactant intactId="EBI-1387800">
        <id>Q9Y394</id>
        <label>DHRS7</label>
    </interactant>
    <organismsDiffer>false</organismsDiffer>
    <experiments>3</experiments>
</comment>
<comment type="interaction">
    <interactant intactId="EBI-727322">
        <id>Q9BXJ8</id>
    </interactant>
    <interactant intactId="EBI-3915253">
        <id>Q15125</id>
        <label>EBP</label>
    </interactant>
    <organismsDiffer>false</organismsDiffer>
    <experiments>3</experiments>
</comment>
<comment type="interaction">
    <interactant intactId="EBI-727322">
        <id>Q9BXJ8</id>
    </interactant>
    <interactant intactId="EBI-18304435">
        <id>Q5JX71</id>
        <label>FAM209A</label>
    </interactant>
    <organismsDiffer>false</organismsDiffer>
    <experiments>3</experiments>
</comment>
<comment type="interaction">
    <interactant intactId="EBI-727322">
        <id>Q9BXJ8</id>
    </interactant>
    <interactant intactId="EBI-18053395">
        <id>Q7Z5P4</id>
        <label>HSD17B13</label>
    </interactant>
    <organismsDiffer>false</organismsDiffer>
    <experiments>3</experiments>
</comment>
<comment type="interaction">
    <interactant intactId="EBI-727322">
        <id>Q9BXJ8</id>
    </interactant>
    <interactant intactId="EBI-15672507">
        <id>O15243</id>
        <label>LEPROT</label>
    </interactant>
    <organismsDiffer>false</organismsDiffer>
    <experiments>3</experiments>
</comment>
<comment type="interaction">
    <interactant intactId="EBI-727322">
        <id>Q9BXJ8</id>
    </interactant>
    <interactant intactId="EBI-11304917">
        <id>Q8N386</id>
        <label>LRRC25</label>
    </interactant>
    <organismsDiffer>false</organismsDiffer>
    <experiments>3</experiments>
</comment>
<comment type="interaction">
    <interactant intactId="EBI-727322">
        <id>Q9BXJ8</id>
    </interactant>
    <interactant intactId="EBI-11075081">
        <id>Q53FV1</id>
        <label>ORMDL2</label>
    </interactant>
    <organismsDiffer>false</organismsDiffer>
    <experiments>3</experiments>
</comment>
<comment type="interaction">
    <interactant intactId="EBI-727322">
        <id>Q9BXJ8</id>
    </interactant>
    <interactant intactId="EBI-7545592">
        <id>Q9H6H4</id>
        <label>REEP4</label>
    </interactant>
    <organismsDiffer>false</organismsDiffer>
    <experiments>3</experiments>
</comment>
<comment type="interaction">
    <interactant intactId="EBI-727322">
        <id>Q9BXJ8</id>
    </interactant>
    <interactant intactId="EBI-17247926">
        <id>Q9NY72</id>
        <label>SCN3B</label>
    </interactant>
    <organismsDiffer>false</organismsDiffer>
    <experiments>3</experiments>
</comment>
<comment type="interaction">
    <interactant intactId="EBI-727322">
        <id>Q9BXJ8</id>
    </interactant>
    <interactant intactId="EBI-10819434">
        <id>Q9NPE6</id>
        <label>SPAG4</label>
    </interactant>
    <organismsDiffer>false</organismsDiffer>
    <experiments>3</experiments>
</comment>
<comment type="interaction">
    <interactant intactId="EBI-727322">
        <id>Q9BXJ8</id>
    </interactant>
    <interactant intactId="EBI-712466">
        <id>Q16623</id>
        <label>STX1A</label>
    </interactant>
    <organismsDiffer>false</organismsDiffer>
    <experiments>3</experiments>
</comment>
<comment type="interaction">
    <interactant intactId="EBI-727322">
        <id>Q9BXJ8</id>
    </interactant>
    <interactant intactId="EBI-11956649">
        <id>P32856-2</id>
        <label>STX2</label>
    </interactant>
    <organismsDiffer>false</organismsDiffer>
    <experiments>3</experiments>
</comment>
<comment type="interaction">
    <interactant intactId="EBI-727322">
        <id>Q9BXJ8</id>
    </interactant>
    <interactant intactId="EBI-8638294">
        <id>Q9NUH8</id>
        <label>TMEM14B</label>
    </interactant>
    <organismsDiffer>false</organismsDiffer>
    <experiments>3</experiments>
</comment>
<comment type="interaction">
    <interactant intactId="EBI-727322">
        <id>Q9BXJ8</id>
    </interactant>
    <interactant intactId="EBI-11722971">
        <id>Q53FP2</id>
        <label>TMEM35A</label>
    </interactant>
    <organismsDiffer>false</organismsDiffer>
    <experiments>3</experiments>
</comment>
<comment type="interaction">
    <interactant intactId="EBI-727322">
        <id>Q9BXJ8</id>
    </interactant>
    <interactant intactId="EBI-2548832">
        <id>Q8N661</id>
        <label>TMEM86B</label>
    </interactant>
    <organismsDiffer>false</organismsDiffer>
    <experiments>3</experiments>
</comment>
<comment type="interaction">
    <interactant intactId="EBI-727322">
        <id>Q9BXJ8</id>
    </interactant>
    <interactant intactId="EBI-17198826">
        <id>Q6PEY1</id>
        <label>TMEM88</label>
    </interactant>
    <organismsDiffer>false</organismsDiffer>
    <experiments>3</experiments>
</comment>
<comment type="interaction">
    <interactant intactId="EBI-727322">
        <id>Q9BXJ8</id>
    </interactant>
    <interactant intactId="EBI-6447886">
        <id>Q9Y320</id>
        <label>TMX2</label>
    </interactant>
    <organismsDiffer>false</organismsDiffer>
    <experiments>3</experiments>
</comment>
<comment type="interaction">
    <interactant intactId="EBI-727322">
        <id>Q9BXJ8</id>
    </interactant>
    <interactant intactId="EBI-17249488">
        <id>Q6ZUI0</id>
        <label>TPRG1</label>
    </interactant>
    <organismsDiffer>false</organismsDiffer>
    <experiments>3</experiments>
</comment>
<comment type="interaction">
    <interactant intactId="EBI-727322">
        <id>Q9BXJ8</id>
    </interactant>
    <interactant intactId="EBI-17670824">
        <id>Q8WUV1</id>
        <label>TSPAN18</label>
    </interactant>
    <organismsDiffer>false</organismsDiffer>
    <experiments>3</experiments>
</comment>
<comment type="interaction">
    <interactant intactId="EBI-727322">
        <id>Q9BXJ8</id>
    </interactant>
    <interactant intactId="EBI-12837904">
        <id>Q96MV8</id>
        <label>ZDHHC15</label>
    </interactant>
    <organismsDiffer>false</organismsDiffer>
    <experiments>3</experiments>
</comment>
<comment type="subcellular location">
    <subcellularLocation>
        <location evidence="8">Cell membrane</location>
        <topology evidence="5">Multi-pass membrane protein</topology>
    </subcellularLocation>
    <subcellularLocation>
        <location evidence="1">Nucleus inner membrane</location>
        <topology evidence="5">Multi-pass membrane protein</topology>
    </subcellularLocation>
    <subcellularLocation>
        <location evidence="8">Endoplasmic reticulum</location>
    </subcellularLocation>
</comment>
<comment type="alternative products">
    <event type="alternative splicing"/>
    <isoform>
        <id>Q9BXJ8-1</id>
        <name>1</name>
        <sequence type="displayed"/>
    </isoform>
    <isoform>
        <id>Q9BXJ8-2</id>
        <name>2</name>
        <sequence type="described" ref="VSP_029148"/>
    </isoform>
</comment>
<comment type="tissue specificity">
    <text evidence="4">Expressed in nociceptors.</text>
</comment>
<comment type="domain">
    <text evidence="5 6">The transmembrane domain (TMD) has structural homology to the very long chain fatty acid elongase 7, ELOVL7, despite low sequence homology between them.</text>
</comment>
<comment type="miscellaneous">
    <text evidence="13">TACAN means movement in Farsi.</text>
</comment>
<comment type="similarity">
    <text evidence="15">Belongs to the TMEM120 family.</text>
</comment>
<comment type="caution">
    <text evidence="1 5 6 7 9 15">Whether TMEM120S functions as a mechanosensitive ion channel is controversial (By similarity). Several studies show that TMEM120A does not exhibit mechanosensitive channel activity and display no typical ion channel structural characteristics (PubMed:34374645, PubMed:34409941, PubMed:34465718). One publication, however, suggests the presence of a potential ion permeation pathway based on molecular dynamics simulation (PubMed:35235791). Its structural homology to ELOVL7, leads to suggest than TMEM120A may function as an enzyme involved in fatty acid metabolism, although its enzymatic activity and its potential substrates remain unknown (PubMed:34374645, PubMed:34409941, PubMed:34465718). Whether TMEM120A is an enzyme rather than an ion channel is still under debate.</text>
</comment>
<name>TACAN_HUMAN</name>
<evidence type="ECO:0000250" key="1">
    <source>
        <dbReference type="UniProtKB" id="Q8C1E7"/>
    </source>
</evidence>
<evidence type="ECO:0000269" key="2">
    <source>
    </source>
</evidence>
<evidence type="ECO:0000269" key="3">
    <source>
    </source>
</evidence>
<evidence type="ECO:0000269" key="4">
    <source>
    </source>
</evidence>
<evidence type="ECO:0000269" key="5">
    <source>
    </source>
</evidence>
<evidence type="ECO:0000269" key="6">
    <source>
    </source>
</evidence>
<evidence type="ECO:0000269" key="7">
    <source>
    </source>
</evidence>
<evidence type="ECO:0000269" key="8">
    <source>
    </source>
</evidence>
<evidence type="ECO:0000269" key="9">
    <source>
    </source>
</evidence>
<evidence type="ECO:0000269" key="10">
    <source>
    </source>
</evidence>
<evidence type="ECO:0000303" key="11">
    <source>
    </source>
</evidence>
<evidence type="ECO:0000303" key="12">
    <source>
    </source>
</evidence>
<evidence type="ECO:0000303" key="13">
    <source>
    </source>
</evidence>
<evidence type="ECO:0000303" key="14">
    <source ref="1"/>
</evidence>
<evidence type="ECO:0000305" key="15"/>
<evidence type="ECO:0000312" key="16">
    <source>
        <dbReference type="HGNC" id="HGNC:21697"/>
    </source>
</evidence>
<evidence type="ECO:0000312" key="17">
    <source>
        <dbReference type="PDB" id="7N7P"/>
    </source>
</evidence>
<evidence type="ECO:0007744" key="18">
    <source>
        <dbReference type="PDB" id="7CXR"/>
    </source>
</evidence>
<evidence type="ECO:0007744" key="19">
    <source>
        <dbReference type="PDB" id="7F3T"/>
    </source>
</evidence>
<evidence type="ECO:0007744" key="20">
    <source>
        <dbReference type="PDB" id="7F3U"/>
    </source>
</evidence>
<evidence type="ECO:0007744" key="21">
    <source>
        <dbReference type="PDB" id="7F6V"/>
    </source>
</evidence>
<evidence type="ECO:0007744" key="22">
    <source>
        <dbReference type="PDB" id="7N7P"/>
    </source>
</evidence>
<evidence type="ECO:0007829" key="23">
    <source>
        <dbReference type="PDB" id="7N7P"/>
    </source>
</evidence>
<feature type="chain" id="PRO_0000309339" description="Transmembrane protein 120A">
    <location>
        <begin position="1"/>
        <end position="343"/>
    </location>
</feature>
<feature type="topological domain" description="Cytoplasmic" evidence="15">
    <location>
        <begin position="1"/>
        <end position="132"/>
    </location>
</feature>
<feature type="transmembrane region" description="Helical; Name=1" evidence="5 17">
    <location>
        <begin position="133"/>
        <end position="152"/>
    </location>
</feature>
<feature type="topological domain" description="Extracellular" evidence="15">
    <location>
        <begin position="153"/>
        <end position="158"/>
    </location>
</feature>
<feature type="transmembrane region" description="Helical; Name=2" evidence="5 17">
    <location>
        <begin position="159"/>
        <end position="177"/>
    </location>
</feature>
<feature type="topological domain" description="Cytoplasmic" evidence="15">
    <location>
        <begin position="178"/>
        <end position="190"/>
    </location>
</feature>
<feature type="transmembrane region" description="Helical; Name=3" evidence="5 17">
    <location>
        <begin position="191"/>
        <end position="209"/>
    </location>
</feature>
<feature type="topological domain" description="Extracellular" evidence="15">
    <location>
        <begin position="210"/>
        <end position="218"/>
    </location>
</feature>
<feature type="transmembrane region" description="Helical; Name=4" evidence="5 17">
    <location>
        <begin position="219"/>
        <end position="240"/>
    </location>
</feature>
<feature type="topological domain" description="Cytoplasmic" evidence="15">
    <location>
        <begin position="241"/>
        <end position="270"/>
    </location>
</feature>
<feature type="transmembrane region" description="Helical; Name=5" evidence="5 17">
    <location>
        <begin position="271"/>
        <end position="294"/>
    </location>
</feature>
<feature type="topological domain" description="Extracellular" evidence="15">
    <location>
        <begin position="295"/>
        <end position="304"/>
    </location>
</feature>
<feature type="transmembrane region" description="Helical; Name=6" evidence="5 17">
    <location>
        <begin position="305"/>
        <end position="330"/>
    </location>
</feature>
<feature type="topological domain" description="Cytoplasmic" evidence="15">
    <location>
        <begin position="331"/>
        <end position="343"/>
    </location>
</feature>
<feature type="binding site" evidence="5 6 19 22">
    <location>
        <position position="130"/>
    </location>
    <ligand>
        <name>CoA</name>
        <dbReference type="ChEBI" id="CHEBI:57287"/>
    </ligand>
</feature>
<feature type="binding site" evidence="5 22">
    <location>
        <position position="187"/>
    </location>
    <ligand>
        <name>CoA</name>
        <dbReference type="ChEBI" id="CHEBI:57287"/>
    </ligand>
</feature>
<feature type="binding site" evidence="5 22">
    <location>
        <position position="188"/>
    </location>
    <ligand>
        <name>CoA</name>
        <dbReference type="ChEBI" id="CHEBI:57287"/>
    </ligand>
</feature>
<feature type="binding site" evidence="5 6 19 22">
    <location>
        <position position="237"/>
    </location>
    <ligand>
        <name>CoA</name>
        <dbReference type="ChEBI" id="CHEBI:57287"/>
    </ligand>
</feature>
<feature type="binding site" evidence="5 6 19 22">
    <location>
        <position position="240"/>
    </location>
    <ligand>
        <name>CoA</name>
        <dbReference type="ChEBI" id="CHEBI:57287"/>
    </ligand>
</feature>
<feature type="binding site" evidence="5 22">
    <location>
        <position position="241"/>
    </location>
    <ligand>
        <name>CoA</name>
        <dbReference type="ChEBI" id="CHEBI:57287"/>
    </ligand>
</feature>
<feature type="binding site" evidence="1">
    <location>
        <position position="283"/>
    </location>
    <ligand>
        <name>CoA</name>
        <dbReference type="ChEBI" id="CHEBI:57287"/>
    </ligand>
</feature>
<feature type="binding site" evidence="5 22">
    <location>
        <position position="332"/>
    </location>
    <ligand>
        <name>CoA</name>
        <dbReference type="ChEBI" id="CHEBI:57287"/>
    </ligand>
</feature>
<feature type="splice variant" id="VSP_029148" description="In isoform 2." evidence="11">
    <original>IKGWWVFHHYVSTFLSGVMLTWPDGLMYQKFRNQFLSFSMYQSFVQFLQYYYQSGCLYRLRALGERHTMDLTVEGFQSWMWRGLTFLLPFLFFGHFWQLFNALTLFNLAQDPQCKEWQVLMCGFPFLLLFLGNFFTTLRVVHHKFHSQRHGSKKD</original>
    <variation>WAGRALREGSMEWGARTLREAGTGAGGDGGSLLQDQRLVGVPSLRVHLPVGSHADVVRRSHVPEIPEPIPLLFHVPELRAVSPVLLPERLPLPPAGAGRAAHHGPHCGGLPVLDVAGPHLPAAFSFLWTLLAAF</variation>
    <location>
        <begin position="189"/>
        <end position="343"/>
    </location>
</feature>
<feature type="sequence variant" id="VAR_036933" description="In dbSNP:rs17852664." evidence="2">
    <original>Q</original>
    <variation>R</variation>
    <location>
        <position position="86"/>
    </location>
</feature>
<feature type="sequence variant" id="VAR_036934" description="In dbSNP:rs17855697." evidence="2">
    <original>T</original>
    <variation>A</variation>
    <location>
        <position position="201"/>
    </location>
</feature>
<feature type="mutagenesis site" description="Decreases the binding affinity with CoA." evidence="6">
    <original>W</original>
    <variation>A</variation>
    <location>
        <position position="193"/>
    </location>
</feature>
<feature type="mutagenesis site" description="Increases membrane pressure-activated current." evidence="9">
    <original>M</original>
    <variation>A</variation>
    <location>
        <position position="207"/>
    </location>
</feature>
<feature type="helix" evidence="23">
    <location>
        <begin position="9"/>
        <end position="68"/>
    </location>
</feature>
<feature type="helix" evidence="23">
    <location>
        <begin position="81"/>
        <end position="100"/>
    </location>
</feature>
<feature type="helix" evidence="23">
    <location>
        <begin position="107"/>
        <end position="112"/>
    </location>
</feature>
<feature type="helix" evidence="23">
    <location>
        <begin position="123"/>
        <end position="152"/>
    </location>
</feature>
<feature type="helix" evidence="23">
    <location>
        <begin position="158"/>
        <end position="184"/>
    </location>
</feature>
<feature type="helix" evidence="23">
    <location>
        <begin position="191"/>
        <end position="208"/>
    </location>
</feature>
<feature type="helix" evidence="23">
    <location>
        <begin position="214"/>
        <end position="253"/>
    </location>
</feature>
<feature type="helix" evidence="23">
    <location>
        <begin position="262"/>
        <end position="296"/>
    </location>
</feature>
<feature type="strand" evidence="23">
    <location>
        <begin position="299"/>
        <end position="301"/>
    </location>
</feature>
<feature type="helix" evidence="23">
    <location>
        <begin position="306"/>
        <end position="334"/>
    </location>
</feature>
<accession>Q9BXJ8</accession>
<accession>Q86TE9</accession>
<accession>Q8N6P1</accession>
<organism>
    <name type="scientific">Homo sapiens</name>
    <name type="common">Human</name>
    <dbReference type="NCBI Taxonomy" id="9606"/>
    <lineage>
        <taxon>Eukaryota</taxon>
        <taxon>Metazoa</taxon>
        <taxon>Chordata</taxon>
        <taxon>Craniata</taxon>
        <taxon>Vertebrata</taxon>
        <taxon>Euteleostomi</taxon>
        <taxon>Mammalia</taxon>
        <taxon>Eutheria</taxon>
        <taxon>Euarchontoglires</taxon>
        <taxon>Primates</taxon>
        <taxon>Haplorrhini</taxon>
        <taxon>Catarrhini</taxon>
        <taxon>Hominidae</taxon>
        <taxon>Homo</taxon>
    </lineage>
</organism>
<sequence length="343" mass="40610">MQPPPPGPLGDCLRDWEDLQQDFQNIQETHRLYRLKLEELTKLQNNCTSSITRQKKRLQELALALKKCKPSLPAEAEGAAQELENQMKERQGLFFDMEAYLPKKNGLYLSLVLGNVNVTLLSKQAKFAYKDEYEKFKLYLTIILILISFTCRFLLNSRVTDAAFNFLLVWYYCTLTIRESILINNGSRIKGWWVFHHYVSTFLSGVMLTWPDGLMYQKFRNQFLSFSMYQSFVQFLQYYYQSGCLYRLRALGERHTMDLTVEGFQSWMWRGLTFLLPFLFFGHFWQLFNALTLFNLAQDPQCKEWQVLMCGFPFLLLFLGNFFTTLRVVHHKFHSQRHGSKKD</sequence>
<proteinExistence type="evidence at protein level"/>
<gene>
    <name evidence="12 16" type="primary">TMEM120A</name>
    <name evidence="13" type="synonym">TACAN</name>
    <name evidence="14" type="synonym">TMPIT</name>
</gene>
<dbReference type="EMBL" id="AF327923">
    <property type="protein sequence ID" value="AAK16442.1"/>
    <property type="molecule type" value="mRNA"/>
</dbReference>
<dbReference type="EMBL" id="CH471066">
    <property type="status" value="NOT_ANNOTATED_CDS"/>
    <property type="molecule type" value="Genomic_DNA"/>
</dbReference>
<dbReference type="EMBL" id="BC029487">
    <property type="protein sequence ID" value="AAH29487.1"/>
    <property type="molecule type" value="mRNA"/>
</dbReference>
<dbReference type="EMBL" id="BC051850">
    <property type="protein sequence ID" value="AAH51850.1"/>
    <property type="molecule type" value="mRNA"/>
</dbReference>
<dbReference type="CCDS" id="CCDS64688.1">
    <molecule id="Q9BXJ8-1"/>
</dbReference>
<dbReference type="RefSeq" id="NP_114131.1">
    <molecule id="Q9BXJ8-1"/>
    <property type="nucleotide sequence ID" value="NM_031925.3"/>
</dbReference>
<dbReference type="PDB" id="7CXR">
    <property type="method" value="EM"/>
    <property type="resolution" value="3.40 A"/>
    <property type="chains" value="A/B=1-343"/>
</dbReference>
<dbReference type="PDB" id="7F3T">
    <property type="method" value="EM"/>
    <property type="resolution" value="3.69 A"/>
    <property type="chains" value="A/B=2-343"/>
</dbReference>
<dbReference type="PDB" id="7F3U">
    <property type="method" value="EM"/>
    <property type="resolution" value="4.00 A"/>
    <property type="chains" value="A/B=2-343"/>
</dbReference>
<dbReference type="PDB" id="7F6V">
    <property type="method" value="EM"/>
    <property type="resolution" value="3.66 A"/>
    <property type="chains" value="A/B=1-343"/>
</dbReference>
<dbReference type="PDB" id="7N7P">
    <property type="method" value="EM"/>
    <property type="resolution" value="3.24 A"/>
    <property type="chains" value="A/B=2-343"/>
</dbReference>
<dbReference type="PDBsum" id="7CXR"/>
<dbReference type="PDBsum" id="7F3T"/>
<dbReference type="PDBsum" id="7F3U"/>
<dbReference type="PDBsum" id="7F6V"/>
<dbReference type="PDBsum" id="7N7P"/>
<dbReference type="EMDB" id="EMD-24230"/>
<dbReference type="EMDB" id="EMD-30495"/>
<dbReference type="EMDB" id="EMD-31440"/>
<dbReference type="EMDB" id="EMD-31441"/>
<dbReference type="EMDB" id="EMD-31482"/>
<dbReference type="SMR" id="Q9BXJ8"/>
<dbReference type="BioGRID" id="123777">
    <property type="interactions" value="69"/>
</dbReference>
<dbReference type="FunCoup" id="Q9BXJ8">
    <property type="interactions" value="406"/>
</dbReference>
<dbReference type="IntAct" id="Q9BXJ8">
    <property type="interactions" value="63"/>
</dbReference>
<dbReference type="MINT" id="Q9BXJ8"/>
<dbReference type="STRING" id="9606.ENSP00000484736"/>
<dbReference type="TCDB" id="1.A.119.1.2">
    <property type="family name" value="the stress-inducible transmembrane protein (tmpit) family"/>
</dbReference>
<dbReference type="iPTMnet" id="Q9BXJ8"/>
<dbReference type="PhosphoSitePlus" id="Q9BXJ8"/>
<dbReference type="SwissPalm" id="Q9BXJ8"/>
<dbReference type="BioMuta" id="TMEM120A"/>
<dbReference type="DMDM" id="74717620"/>
<dbReference type="jPOST" id="Q9BXJ8"/>
<dbReference type="MassIVE" id="Q9BXJ8"/>
<dbReference type="PaxDb" id="9606-ENSP00000473983"/>
<dbReference type="PeptideAtlas" id="Q9BXJ8"/>
<dbReference type="ProteomicsDB" id="79441">
    <molecule id="Q9BXJ8-1"/>
</dbReference>
<dbReference type="ProteomicsDB" id="79442">
    <molecule id="Q9BXJ8-2"/>
</dbReference>
<dbReference type="Pumba" id="Q9BXJ8"/>
<dbReference type="Antibodypedia" id="29220">
    <property type="antibodies" value="24 antibodies from 13 providers"/>
</dbReference>
<dbReference type="DNASU" id="83862"/>
<dbReference type="Ensembl" id="ENST00000493111.7">
    <molecule id="Q9BXJ8-1"/>
    <property type="protein sequence ID" value="ENSP00000473983.1"/>
    <property type="gene ID" value="ENSG00000189077.11"/>
</dbReference>
<dbReference type="GeneID" id="83862"/>
<dbReference type="KEGG" id="hsa:83862"/>
<dbReference type="MANE-Select" id="ENST00000493111.7">
    <property type="protein sequence ID" value="ENSP00000473983.1"/>
    <property type="RefSeq nucleotide sequence ID" value="NM_031925.3"/>
    <property type="RefSeq protein sequence ID" value="NP_114131.1"/>
</dbReference>
<dbReference type="UCSC" id="uc032ztu.2">
    <molecule id="Q9BXJ8-1"/>
    <property type="organism name" value="human"/>
</dbReference>
<dbReference type="AGR" id="HGNC:21697"/>
<dbReference type="CTD" id="83862"/>
<dbReference type="DisGeNET" id="83862"/>
<dbReference type="GeneCards" id="TMEM120A"/>
<dbReference type="HGNC" id="HGNC:21697">
    <property type="gene designation" value="TMEM120A"/>
</dbReference>
<dbReference type="HPA" id="ENSG00000189077">
    <property type="expression patterns" value="Low tissue specificity"/>
</dbReference>
<dbReference type="MIM" id="616550">
    <property type="type" value="gene"/>
</dbReference>
<dbReference type="neXtProt" id="NX_Q9BXJ8"/>
<dbReference type="OpenTargets" id="ENSG00000189077"/>
<dbReference type="PharmGKB" id="PA162405861"/>
<dbReference type="VEuPathDB" id="HostDB:ENSG00000189077"/>
<dbReference type="eggNOG" id="KOG4758">
    <property type="taxonomic scope" value="Eukaryota"/>
</dbReference>
<dbReference type="GeneTree" id="ENSGT00390000007848"/>
<dbReference type="HOGENOM" id="CLU_048749_1_1_1"/>
<dbReference type="InParanoid" id="Q9BXJ8"/>
<dbReference type="OMA" id="DRYRYKQ"/>
<dbReference type="OrthoDB" id="2015098at2759"/>
<dbReference type="PAN-GO" id="Q9BXJ8">
    <property type="GO annotations" value="2 GO annotations based on evolutionary models"/>
</dbReference>
<dbReference type="PhylomeDB" id="Q9BXJ8"/>
<dbReference type="PathwayCommons" id="Q9BXJ8"/>
<dbReference type="SignaLink" id="Q9BXJ8"/>
<dbReference type="BioGRID-ORCS" id="83862">
    <property type="hits" value="11 hits in 704 CRISPR screens"/>
</dbReference>
<dbReference type="ChiTaRS" id="TMEM120A">
    <property type="organism name" value="human"/>
</dbReference>
<dbReference type="GenomeRNAi" id="83862"/>
<dbReference type="Pharos" id="Q9BXJ8">
    <property type="development level" value="Tdark"/>
</dbReference>
<dbReference type="PRO" id="PR:Q9BXJ8"/>
<dbReference type="Proteomes" id="UP000005640">
    <property type="component" value="Chromosome 7"/>
</dbReference>
<dbReference type="RNAct" id="Q9BXJ8">
    <property type="molecule type" value="protein"/>
</dbReference>
<dbReference type="Bgee" id="ENSG00000189077">
    <property type="expression patterns" value="Expressed in right testis and 162 other cell types or tissues"/>
</dbReference>
<dbReference type="ExpressionAtlas" id="Q9BXJ8">
    <property type="expression patterns" value="baseline and differential"/>
</dbReference>
<dbReference type="GO" id="GO:0005783">
    <property type="term" value="C:endoplasmic reticulum"/>
    <property type="evidence" value="ECO:0000314"/>
    <property type="project" value="UniProtKB"/>
</dbReference>
<dbReference type="GO" id="GO:0016020">
    <property type="term" value="C:membrane"/>
    <property type="evidence" value="ECO:0000318"/>
    <property type="project" value="GO_Central"/>
</dbReference>
<dbReference type="GO" id="GO:0005637">
    <property type="term" value="C:nuclear inner membrane"/>
    <property type="evidence" value="ECO:0007669"/>
    <property type="project" value="UniProtKB-SubCell"/>
</dbReference>
<dbReference type="GO" id="GO:0005886">
    <property type="term" value="C:plasma membrane"/>
    <property type="evidence" value="ECO:0000314"/>
    <property type="project" value="UniProtKB"/>
</dbReference>
<dbReference type="GO" id="GO:0120225">
    <property type="term" value="F:coenzyme A binding"/>
    <property type="evidence" value="ECO:0000314"/>
    <property type="project" value="UniProtKB"/>
</dbReference>
<dbReference type="GO" id="GO:0005216">
    <property type="term" value="F:monoatomic ion channel activity"/>
    <property type="evidence" value="ECO:0000250"/>
    <property type="project" value="UniProtKB"/>
</dbReference>
<dbReference type="GO" id="GO:0140374">
    <property type="term" value="P:antiviral innate immune response"/>
    <property type="evidence" value="ECO:0000315"/>
    <property type="project" value="UniProtKB"/>
</dbReference>
<dbReference type="GO" id="GO:0050966">
    <property type="term" value="P:detection of mechanical stimulus involved in sensory perception of pain"/>
    <property type="evidence" value="ECO:0000250"/>
    <property type="project" value="UniProtKB"/>
</dbReference>
<dbReference type="GO" id="GO:0045444">
    <property type="term" value="P:fat cell differentiation"/>
    <property type="evidence" value="ECO:0000315"/>
    <property type="project" value="UniProtKB"/>
</dbReference>
<dbReference type="GO" id="GO:0034220">
    <property type="term" value="P:monoatomic ion transmembrane transport"/>
    <property type="evidence" value="ECO:0000250"/>
    <property type="project" value="UniProtKB"/>
</dbReference>
<dbReference type="GO" id="GO:0051291">
    <property type="term" value="P:protein heterooligomerization"/>
    <property type="evidence" value="ECO:0000314"/>
    <property type="project" value="UniProtKB"/>
</dbReference>
<dbReference type="GO" id="GO:0051260">
    <property type="term" value="P:protein homooligomerization"/>
    <property type="evidence" value="ECO:0000314"/>
    <property type="project" value="UniProtKB"/>
</dbReference>
<dbReference type="InterPro" id="IPR012926">
    <property type="entry name" value="TMEM120A/B"/>
</dbReference>
<dbReference type="PANTHER" id="PTHR21433:SF1">
    <property type="entry name" value="ION CHANNEL TACAN"/>
    <property type="match status" value="1"/>
</dbReference>
<dbReference type="PANTHER" id="PTHR21433">
    <property type="entry name" value="TRANSMEMBRANE PROTEIN INDUCED BY TUMOR NECROSIS FACTOR ALPHA"/>
    <property type="match status" value="1"/>
</dbReference>
<dbReference type="Pfam" id="PF07851">
    <property type="entry name" value="TMEM120A-B"/>
    <property type="match status" value="1"/>
</dbReference>